<evidence type="ECO:0000255" key="1">
    <source>
        <dbReference type="PROSITE-ProRule" id="PRU00238"/>
    </source>
</evidence>
<reference key="1">
    <citation type="journal article" date="1983" name="FEBS Lett.">
        <title>Characterization of hemoglobin from the lizard Uromastix hardwickii.</title>
        <authorList>
            <person name="Naqvi S."/>
            <person name="Zaidi Z.H."/>
            <person name="von Bahr-Lindstroem H."/>
            <person name="Carlquist M."/>
            <person name="Joernvall H."/>
        </authorList>
    </citation>
    <scope>PROTEIN SEQUENCE</scope>
</reference>
<sequence>VGPHLDDYGGEALHRNFEVYPQTKTYFPHFDASAGSNQLK</sequence>
<keyword id="KW-0903">Direct protein sequencing</keyword>
<keyword id="KW-0349">Heme</keyword>
<keyword id="KW-0408">Iron</keyword>
<keyword id="KW-0479">Metal-binding</keyword>
<keyword id="KW-0561">Oxygen transport</keyword>
<keyword id="KW-0813">Transport</keyword>
<dbReference type="PIR" id="A05301">
    <property type="entry name" value="A05301"/>
</dbReference>
<dbReference type="SMR" id="P18980"/>
<dbReference type="GO" id="GO:0020037">
    <property type="term" value="F:heme binding"/>
    <property type="evidence" value="ECO:0007669"/>
    <property type="project" value="InterPro"/>
</dbReference>
<dbReference type="GO" id="GO:0046872">
    <property type="term" value="F:metal ion binding"/>
    <property type="evidence" value="ECO:0007669"/>
    <property type="project" value="UniProtKB-KW"/>
</dbReference>
<dbReference type="GO" id="GO:0019825">
    <property type="term" value="F:oxygen binding"/>
    <property type="evidence" value="ECO:0007669"/>
    <property type="project" value="InterPro"/>
</dbReference>
<dbReference type="GO" id="GO:0005344">
    <property type="term" value="F:oxygen carrier activity"/>
    <property type="evidence" value="ECO:0007669"/>
    <property type="project" value="UniProtKB-KW"/>
</dbReference>
<dbReference type="Gene3D" id="1.10.490.10">
    <property type="entry name" value="Globins"/>
    <property type="match status" value="1"/>
</dbReference>
<dbReference type="InterPro" id="IPR000971">
    <property type="entry name" value="Globin"/>
</dbReference>
<dbReference type="InterPro" id="IPR009050">
    <property type="entry name" value="Globin-like_sf"/>
</dbReference>
<dbReference type="InterPro" id="IPR012292">
    <property type="entry name" value="Globin/Proto"/>
</dbReference>
<dbReference type="Pfam" id="PF00042">
    <property type="entry name" value="Globin"/>
    <property type="match status" value="1"/>
</dbReference>
<dbReference type="SUPFAM" id="SSF46458">
    <property type="entry name" value="Globin-like"/>
    <property type="match status" value="1"/>
</dbReference>
<dbReference type="PROSITE" id="PS01033">
    <property type="entry name" value="GLOBIN"/>
    <property type="match status" value="1"/>
</dbReference>
<comment type="function">
    <text>Involved in oxygen transport from the lung to the various peripheral tissues.</text>
</comment>
<comment type="subunit">
    <text>Heterotetramer of two alpha chains and two beta chains.</text>
</comment>
<comment type="tissue specificity">
    <text>Red blood cells.</text>
</comment>
<comment type="similarity">
    <text evidence="1">Belongs to the globin family.</text>
</comment>
<proteinExistence type="evidence at protein level"/>
<protein>
    <recommendedName>
        <fullName>Hemoglobin subunit alpha-2</fullName>
    </recommendedName>
    <alternativeName>
        <fullName>Alpha-2-globin</fullName>
    </alternativeName>
    <alternativeName>
        <fullName>Hemoglobin alpha-2 chain</fullName>
    </alternativeName>
</protein>
<feature type="chain" id="PRO_0000052797" description="Hemoglobin subunit alpha-2">
    <location>
        <begin position="1" status="less than"/>
        <end position="40" status="greater than"/>
    </location>
</feature>
<feature type="domain" description="Globin" evidence="1">
    <location>
        <begin position="1"/>
        <end position="40"/>
    </location>
</feature>
<feature type="non-terminal residue">
    <location>
        <position position="1"/>
    </location>
</feature>
<feature type="non-terminal residue">
    <location>
        <position position="40"/>
    </location>
</feature>
<accession>P18980</accession>
<name>HBA2_SAAHA</name>
<organism>
    <name type="scientific">Saara hardwickii</name>
    <name type="common">Indian spiny-tailed lizard</name>
    <name type="synonym">Uromastyx hardwickii</name>
    <dbReference type="NCBI Taxonomy" id="40250"/>
    <lineage>
        <taxon>Eukaryota</taxon>
        <taxon>Metazoa</taxon>
        <taxon>Chordata</taxon>
        <taxon>Craniata</taxon>
        <taxon>Vertebrata</taxon>
        <taxon>Euteleostomi</taxon>
        <taxon>Lepidosauria</taxon>
        <taxon>Squamata</taxon>
        <taxon>Bifurcata</taxon>
        <taxon>Unidentata</taxon>
        <taxon>Episquamata</taxon>
        <taxon>Toxicofera</taxon>
        <taxon>Iguania</taxon>
        <taxon>Acrodonta</taxon>
        <taxon>Agamidae</taxon>
        <taxon>Uromastycinae</taxon>
        <taxon>Saara</taxon>
    </lineage>
</organism>